<proteinExistence type="inferred from homology"/>
<comment type="function">
    <text evidence="1">The glycine cleavage system catalyzes the degradation of glycine. The H protein shuttles the methylamine group of glycine from the P protein to the T protein.</text>
</comment>
<comment type="cofactor">
    <cofactor evidence="1">
        <name>(R)-lipoate</name>
        <dbReference type="ChEBI" id="CHEBI:83088"/>
    </cofactor>
    <text evidence="1">Binds 1 lipoyl cofactor covalently.</text>
</comment>
<comment type="subunit">
    <text evidence="1">The glycine cleavage system is composed of four proteins: P, T, L and H.</text>
</comment>
<comment type="similarity">
    <text evidence="1">Belongs to the GcvH family.</text>
</comment>
<protein>
    <recommendedName>
        <fullName evidence="1">Glycine cleavage system H protein</fullName>
    </recommendedName>
</protein>
<gene>
    <name evidence="1" type="primary">gcvH</name>
    <name type="ordered locus">NFA_24850</name>
</gene>
<evidence type="ECO:0000255" key="1">
    <source>
        <dbReference type="HAMAP-Rule" id="MF_00272"/>
    </source>
</evidence>
<evidence type="ECO:0000255" key="2">
    <source>
        <dbReference type="PROSITE-ProRule" id="PRU01066"/>
    </source>
</evidence>
<feature type="chain" id="PRO_0000302403" description="Glycine cleavage system H protein">
    <location>
        <begin position="1"/>
        <end position="132"/>
    </location>
</feature>
<feature type="domain" description="Lipoyl-binding" evidence="2">
    <location>
        <begin position="24"/>
        <end position="106"/>
    </location>
</feature>
<feature type="modified residue" description="N6-lipoyllysine" evidence="1">
    <location>
        <position position="65"/>
    </location>
</feature>
<organism>
    <name type="scientific">Nocardia farcinica (strain IFM 10152)</name>
    <dbReference type="NCBI Taxonomy" id="247156"/>
    <lineage>
        <taxon>Bacteria</taxon>
        <taxon>Bacillati</taxon>
        <taxon>Actinomycetota</taxon>
        <taxon>Actinomycetes</taxon>
        <taxon>Mycobacteriales</taxon>
        <taxon>Nocardiaceae</taxon>
        <taxon>Nocardia</taxon>
    </lineage>
</organism>
<dbReference type="EMBL" id="AP006618">
    <property type="protein sequence ID" value="BAD57332.1"/>
    <property type="molecule type" value="Genomic_DNA"/>
</dbReference>
<dbReference type="RefSeq" id="WP_011209017.1">
    <property type="nucleotide sequence ID" value="NC_006361.1"/>
</dbReference>
<dbReference type="SMR" id="Q5YWV9"/>
<dbReference type="STRING" id="247156.NFA_24850"/>
<dbReference type="GeneID" id="61133233"/>
<dbReference type="KEGG" id="nfa:NFA_24850"/>
<dbReference type="eggNOG" id="COG0509">
    <property type="taxonomic scope" value="Bacteria"/>
</dbReference>
<dbReference type="HOGENOM" id="CLU_097408_2_2_11"/>
<dbReference type="OrthoDB" id="9796712at2"/>
<dbReference type="Proteomes" id="UP000006820">
    <property type="component" value="Chromosome"/>
</dbReference>
<dbReference type="GO" id="GO:0005829">
    <property type="term" value="C:cytosol"/>
    <property type="evidence" value="ECO:0007669"/>
    <property type="project" value="TreeGrafter"/>
</dbReference>
<dbReference type="GO" id="GO:0005960">
    <property type="term" value="C:glycine cleavage complex"/>
    <property type="evidence" value="ECO:0007669"/>
    <property type="project" value="InterPro"/>
</dbReference>
<dbReference type="GO" id="GO:0019464">
    <property type="term" value="P:glycine decarboxylation via glycine cleavage system"/>
    <property type="evidence" value="ECO:0007669"/>
    <property type="project" value="UniProtKB-UniRule"/>
</dbReference>
<dbReference type="CDD" id="cd06848">
    <property type="entry name" value="GCS_H"/>
    <property type="match status" value="1"/>
</dbReference>
<dbReference type="Gene3D" id="2.40.50.100">
    <property type="match status" value="1"/>
</dbReference>
<dbReference type="HAMAP" id="MF_00272">
    <property type="entry name" value="GcvH"/>
    <property type="match status" value="1"/>
</dbReference>
<dbReference type="InterPro" id="IPR000089">
    <property type="entry name" value="Biotin_lipoyl"/>
</dbReference>
<dbReference type="InterPro" id="IPR002930">
    <property type="entry name" value="GCV_H"/>
</dbReference>
<dbReference type="InterPro" id="IPR033753">
    <property type="entry name" value="GCV_H/Fam206"/>
</dbReference>
<dbReference type="InterPro" id="IPR017453">
    <property type="entry name" value="GCV_H_sub"/>
</dbReference>
<dbReference type="InterPro" id="IPR011053">
    <property type="entry name" value="Single_hybrid_motif"/>
</dbReference>
<dbReference type="NCBIfam" id="TIGR00527">
    <property type="entry name" value="gcvH"/>
    <property type="match status" value="1"/>
</dbReference>
<dbReference type="NCBIfam" id="NF002270">
    <property type="entry name" value="PRK01202.1"/>
    <property type="match status" value="1"/>
</dbReference>
<dbReference type="PANTHER" id="PTHR11715">
    <property type="entry name" value="GLYCINE CLEAVAGE SYSTEM H PROTEIN"/>
    <property type="match status" value="1"/>
</dbReference>
<dbReference type="PANTHER" id="PTHR11715:SF3">
    <property type="entry name" value="GLYCINE CLEAVAGE SYSTEM H PROTEIN-RELATED"/>
    <property type="match status" value="1"/>
</dbReference>
<dbReference type="Pfam" id="PF01597">
    <property type="entry name" value="GCV_H"/>
    <property type="match status" value="1"/>
</dbReference>
<dbReference type="SUPFAM" id="SSF51230">
    <property type="entry name" value="Single hybrid motif"/>
    <property type="match status" value="1"/>
</dbReference>
<dbReference type="PROSITE" id="PS50968">
    <property type="entry name" value="BIOTINYL_LIPOYL"/>
    <property type="match status" value="1"/>
</dbReference>
<reference key="1">
    <citation type="journal article" date="2004" name="Proc. Natl. Acad. Sci. U.S.A.">
        <title>The complete genomic sequence of Nocardia farcinica IFM 10152.</title>
        <authorList>
            <person name="Ishikawa J."/>
            <person name="Yamashita A."/>
            <person name="Mikami Y."/>
            <person name="Hoshino Y."/>
            <person name="Kurita H."/>
            <person name="Hotta K."/>
            <person name="Shiba T."/>
            <person name="Hattori M."/>
        </authorList>
    </citation>
    <scope>NUCLEOTIDE SEQUENCE [LARGE SCALE GENOMIC DNA]</scope>
    <source>
        <strain>IFM 10152</strain>
    </source>
</reference>
<name>GCSH_NOCFA</name>
<sequence length="132" mass="14136">MAVTPEDLRYTEEHEWVRRIGPTRVRVGITDYAQSQLGDVVYVQLPDEQREAAAGESIAEVESTKSVSDIYAPLAAKVVAVNEELSNAPETLNADPYGAGWLFELEVADAAALDVTLGELLDAAGYQGVIGG</sequence>
<keyword id="KW-0450">Lipoyl</keyword>
<keyword id="KW-1185">Reference proteome</keyword>
<accession>Q5YWV9</accession>